<reference key="1">
    <citation type="submission" date="2007-10" db="EMBL/GenBank/DDBJ databases">
        <title>Brucella canis ATCC 23365 whole genome shotgun sequencing project.</title>
        <authorList>
            <person name="Setubal J.C."/>
            <person name="Bowns C."/>
            <person name="Boyle S."/>
            <person name="Crasta O.R."/>
            <person name="Czar M.J."/>
            <person name="Dharmanolla C."/>
            <person name="Gillespie J.J."/>
            <person name="Kenyon R.W."/>
            <person name="Lu J."/>
            <person name="Mane S."/>
            <person name="Mohapatra S."/>
            <person name="Nagrani S."/>
            <person name="Purkayastha A."/>
            <person name="Rajasimha H.K."/>
            <person name="Shallom J.M."/>
            <person name="Shallom S."/>
            <person name="Shukla M."/>
            <person name="Snyder E.E."/>
            <person name="Sobral B.W."/>
            <person name="Wattam A.R."/>
            <person name="Will R."/>
            <person name="Williams K."/>
            <person name="Yoo H."/>
            <person name="Bruce D."/>
            <person name="Detter C."/>
            <person name="Munk C."/>
            <person name="Brettin T.S."/>
        </authorList>
    </citation>
    <scope>NUCLEOTIDE SEQUENCE [LARGE SCALE GENOMIC DNA]</scope>
    <source>
        <strain>ATCC 23365 / NCTC 10854 / RM-666</strain>
    </source>
</reference>
<organism>
    <name type="scientific">Brucella canis (strain ATCC 23365 / NCTC 10854 / RM-666)</name>
    <dbReference type="NCBI Taxonomy" id="483179"/>
    <lineage>
        <taxon>Bacteria</taxon>
        <taxon>Pseudomonadati</taxon>
        <taxon>Pseudomonadota</taxon>
        <taxon>Alphaproteobacteria</taxon>
        <taxon>Hyphomicrobiales</taxon>
        <taxon>Brucellaceae</taxon>
        <taxon>Brucella/Ochrobactrum group</taxon>
        <taxon>Brucella</taxon>
    </lineage>
</organism>
<name>RLMN_BRUC2</name>
<proteinExistence type="inferred from homology"/>
<gene>
    <name evidence="1" type="primary">rlmN</name>
    <name type="ordered locus">BCAN_A0078</name>
</gene>
<accession>A9M6S9</accession>
<sequence>MSISFDLTIDDTRDQLARHARASLEAKPSLIGMSREEMAAALIAAGVPERQVKMRISQLWHWLYVRGVSDFADMRNISKDLRAMLAQHFTIARPEVVEEQISQDGTRKWLFRFPPRGAGRPVEIESVYIPEEGRGTLCISSQVGCTLTCSFCHTGTQKLVRNLTSEEILAQLLTARDRLGDFPDKDTPDGAMVPAEGRKITNIVMMGMGEPLYNFEEVKKALLIASDGDGLSLSKRRITLSTSGVVPEIYRTGDEIGVMLAISLHAVRDELRDILVPINKKYPLAELIKACREYPGLSNAKRITFEYVMLKDINDSLDDAKLLVKLLQGIPAKINLIPFNPWPGTNYQCSDWEQIEKFADYVNAAGYASPIRTPRGRDILAACGQLKSESERLRKSERLALEAMMIAGHGE</sequence>
<feature type="chain" id="PRO_0000350064" description="Dual-specificity RNA methyltransferase RlmN">
    <location>
        <begin position="1"/>
        <end position="411"/>
    </location>
</feature>
<feature type="domain" description="Radical SAM core" evidence="2">
    <location>
        <begin position="131"/>
        <end position="380"/>
    </location>
</feature>
<feature type="active site" description="Proton acceptor" evidence="1">
    <location>
        <position position="125"/>
    </location>
</feature>
<feature type="active site" description="S-methylcysteine intermediate" evidence="1">
    <location>
        <position position="383"/>
    </location>
</feature>
<feature type="binding site" evidence="1">
    <location>
        <position position="145"/>
    </location>
    <ligand>
        <name>[4Fe-4S] cluster</name>
        <dbReference type="ChEBI" id="CHEBI:49883"/>
        <note>4Fe-4S-S-AdoMet</note>
    </ligand>
</feature>
<feature type="binding site" evidence="1">
    <location>
        <position position="149"/>
    </location>
    <ligand>
        <name>[4Fe-4S] cluster</name>
        <dbReference type="ChEBI" id="CHEBI:49883"/>
        <note>4Fe-4S-S-AdoMet</note>
    </ligand>
</feature>
<feature type="binding site" evidence="1">
    <location>
        <position position="152"/>
    </location>
    <ligand>
        <name>[4Fe-4S] cluster</name>
        <dbReference type="ChEBI" id="CHEBI:49883"/>
        <note>4Fe-4S-S-AdoMet</note>
    </ligand>
</feature>
<feature type="binding site" evidence="1">
    <location>
        <begin position="209"/>
        <end position="210"/>
    </location>
    <ligand>
        <name>S-adenosyl-L-methionine</name>
        <dbReference type="ChEBI" id="CHEBI:59789"/>
    </ligand>
</feature>
<feature type="binding site" evidence="1">
    <location>
        <position position="241"/>
    </location>
    <ligand>
        <name>S-adenosyl-L-methionine</name>
        <dbReference type="ChEBI" id="CHEBI:59789"/>
    </ligand>
</feature>
<feature type="binding site" evidence="1">
    <location>
        <begin position="263"/>
        <end position="265"/>
    </location>
    <ligand>
        <name>S-adenosyl-L-methionine</name>
        <dbReference type="ChEBI" id="CHEBI:59789"/>
    </ligand>
</feature>
<feature type="binding site" evidence="1">
    <location>
        <position position="340"/>
    </location>
    <ligand>
        <name>S-adenosyl-L-methionine</name>
        <dbReference type="ChEBI" id="CHEBI:59789"/>
    </ligand>
</feature>
<feature type="disulfide bond" description="(transient)" evidence="1">
    <location>
        <begin position="138"/>
        <end position="383"/>
    </location>
</feature>
<comment type="function">
    <text evidence="1">Specifically methylates position 2 of adenine 2503 in 23S rRNA and position 2 of adenine 37 in tRNAs. m2A2503 modification seems to play a crucial role in the proofreading step occurring at the peptidyl transferase center and thus would serve to optimize ribosomal fidelity.</text>
</comment>
<comment type="catalytic activity">
    <reaction evidence="1">
        <text>adenosine(2503) in 23S rRNA + 2 reduced [2Fe-2S]-[ferredoxin] + 2 S-adenosyl-L-methionine = 2-methyladenosine(2503) in 23S rRNA + 5'-deoxyadenosine + L-methionine + 2 oxidized [2Fe-2S]-[ferredoxin] + S-adenosyl-L-homocysteine</text>
        <dbReference type="Rhea" id="RHEA:42916"/>
        <dbReference type="Rhea" id="RHEA-COMP:10000"/>
        <dbReference type="Rhea" id="RHEA-COMP:10001"/>
        <dbReference type="Rhea" id="RHEA-COMP:10152"/>
        <dbReference type="Rhea" id="RHEA-COMP:10282"/>
        <dbReference type="ChEBI" id="CHEBI:17319"/>
        <dbReference type="ChEBI" id="CHEBI:33737"/>
        <dbReference type="ChEBI" id="CHEBI:33738"/>
        <dbReference type="ChEBI" id="CHEBI:57844"/>
        <dbReference type="ChEBI" id="CHEBI:57856"/>
        <dbReference type="ChEBI" id="CHEBI:59789"/>
        <dbReference type="ChEBI" id="CHEBI:74411"/>
        <dbReference type="ChEBI" id="CHEBI:74497"/>
        <dbReference type="EC" id="2.1.1.192"/>
    </reaction>
</comment>
<comment type="catalytic activity">
    <reaction evidence="1">
        <text>adenosine(37) in tRNA + 2 reduced [2Fe-2S]-[ferredoxin] + 2 S-adenosyl-L-methionine = 2-methyladenosine(37) in tRNA + 5'-deoxyadenosine + L-methionine + 2 oxidized [2Fe-2S]-[ferredoxin] + S-adenosyl-L-homocysteine</text>
        <dbReference type="Rhea" id="RHEA:43332"/>
        <dbReference type="Rhea" id="RHEA-COMP:10000"/>
        <dbReference type="Rhea" id="RHEA-COMP:10001"/>
        <dbReference type="Rhea" id="RHEA-COMP:10162"/>
        <dbReference type="Rhea" id="RHEA-COMP:10485"/>
        <dbReference type="ChEBI" id="CHEBI:17319"/>
        <dbReference type="ChEBI" id="CHEBI:33737"/>
        <dbReference type="ChEBI" id="CHEBI:33738"/>
        <dbReference type="ChEBI" id="CHEBI:57844"/>
        <dbReference type="ChEBI" id="CHEBI:57856"/>
        <dbReference type="ChEBI" id="CHEBI:59789"/>
        <dbReference type="ChEBI" id="CHEBI:74411"/>
        <dbReference type="ChEBI" id="CHEBI:74497"/>
        <dbReference type="EC" id="2.1.1.192"/>
    </reaction>
</comment>
<comment type="cofactor">
    <cofactor evidence="1">
        <name>[4Fe-4S] cluster</name>
        <dbReference type="ChEBI" id="CHEBI:49883"/>
    </cofactor>
    <text evidence="1">Binds 1 [4Fe-4S] cluster. The cluster is coordinated with 3 cysteines and an exchangeable S-adenosyl-L-methionine.</text>
</comment>
<comment type="subcellular location">
    <subcellularLocation>
        <location evidence="1">Cytoplasm</location>
    </subcellularLocation>
</comment>
<comment type="miscellaneous">
    <text evidence="1">Reaction proceeds by a ping-pong mechanism involving intermediate methylation of a conserved cysteine residue.</text>
</comment>
<comment type="similarity">
    <text evidence="1">Belongs to the radical SAM superfamily. RlmN family.</text>
</comment>
<evidence type="ECO:0000255" key="1">
    <source>
        <dbReference type="HAMAP-Rule" id="MF_01849"/>
    </source>
</evidence>
<evidence type="ECO:0000255" key="2">
    <source>
        <dbReference type="PROSITE-ProRule" id="PRU01266"/>
    </source>
</evidence>
<keyword id="KW-0004">4Fe-4S</keyword>
<keyword id="KW-0963">Cytoplasm</keyword>
<keyword id="KW-1015">Disulfide bond</keyword>
<keyword id="KW-0408">Iron</keyword>
<keyword id="KW-0411">Iron-sulfur</keyword>
<keyword id="KW-0479">Metal-binding</keyword>
<keyword id="KW-0489">Methyltransferase</keyword>
<keyword id="KW-1185">Reference proteome</keyword>
<keyword id="KW-0698">rRNA processing</keyword>
<keyword id="KW-0949">S-adenosyl-L-methionine</keyword>
<keyword id="KW-0808">Transferase</keyword>
<keyword id="KW-0819">tRNA processing</keyword>
<dbReference type="EC" id="2.1.1.192" evidence="1"/>
<dbReference type="EMBL" id="CP000872">
    <property type="protein sequence ID" value="ABX61180.1"/>
    <property type="molecule type" value="Genomic_DNA"/>
</dbReference>
<dbReference type="RefSeq" id="WP_002968086.1">
    <property type="nucleotide sequence ID" value="NC_010103.1"/>
</dbReference>
<dbReference type="SMR" id="A9M6S9"/>
<dbReference type="GeneID" id="97534497"/>
<dbReference type="KEGG" id="bcs:BCAN_A0078"/>
<dbReference type="HOGENOM" id="CLU_029101_2_0_5"/>
<dbReference type="PhylomeDB" id="A9M6S9"/>
<dbReference type="Proteomes" id="UP000001385">
    <property type="component" value="Chromosome I"/>
</dbReference>
<dbReference type="GO" id="GO:0005737">
    <property type="term" value="C:cytoplasm"/>
    <property type="evidence" value="ECO:0007669"/>
    <property type="project" value="UniProtKB-SubCell"/>
</dbReference>
<dbReference type="GO" id="GO:0051539">
    <property type="term" value="F:4 iron, 4 sulfur cluster binding"/>
    <property type="evidence" value="ECO:0007669"/>
    <property type="project" value="UniProtKB-UniRule"/>
</dbReference>
<dbReference type="GO" id="GO:0046872">
    <property type="term" value="F:metal ion binding"/>
    <property type="evidence" value="ECO:0007669"/>
    <property type="project" value="UniProtKB-KW"/>
</dbReference>
<dbReference type="GO" id="GO:0070040">
    <property type="term" value="F:rRNA (adenine(2503)-C2-)-methyltransferase activity"/>
    <property type="evidence" value="ECO:0007669"/>
    <property type="project" value="UniProtKB-UniRule"/>
</dbReference>
<dbReference type="GO" id="GO:0019843">
    <property type="term" value="F:rRNA binding"/>
    <property type="evidence" value="ECO:0007669"/>
    <property type="project" value="UniProtKB-UniRule"/>
</dbReference>
<dbReference type="GO" id="GO:0002935">
    <property type="term" value="F:tRNA (adenine(37)-C2)-methyltransferase activity"/>
    <property type="evidence" value="ECO:0007669"/>
    <property type="project" value="UniProtKB-UniRule"/>
</dbReference>
<dbReference type="GO" id="GO:0000049">
    <property type="term" value="F:tRNA binding"/>
    <property type="evidence" value="ECO:0007669"/>
    <property type="project" value="UniProtKB-UniRule"/>
</dbReference>
<dbReference type="GO" id="GO:0070475">
    <property type="term" value="P:rRNA base methylation"/>
    <property type="evidence" value="ECO:0007669"/>
    <property type="project" value="UniProtKB-UniRule"/>
</dbReference>
<dbReference type="GO" id="GO:0030488">
    <property type="term" value="P:tRNA methylation"/>
    <property type="evidence" value="ECO:0007669"/>
    <property type="project" value="UniProtKB-UniRule"/>
</dbReference>
<dbReference type="CDD" id="cd01335">
    <property type="entry name" value="Radical_SAM"/>
    <property type="match status" value="1"/>
</dbReference>
<dbReference type="FunFam" id="3.20.20.70:FF:000008">
    <property type="entry name" value="Dual-specificity RNA methyltransferase RlmN"/>
    <property type="match status" value="1"/>
</dbReference>
<dbReference type="Gene3D" id="1.10.150.530">
    <property type="match status" value="1"/>
</dbReference>
<dbReference type="Gene3D" id="3.20.20.70">
    <property type="entry name" value="Aldolase class I"/>
    <property type="match status" value="1"/>
</dbReference>
<dbReference type="HAMAP" id="MF_01849">
    <property type="entry name" value="RNA_methyltr_RlmN"/>
    <property type="match status" value="1"/>
</dbReference>
<dbReference type="InterPro" id="IPR013785">
    <property type="entry name" value="Aldolase_TIM"/>
</dbReference>
<dbReference type="InterPro" id="IPR040072">
    <property type="entry name" value="Methyltransferase_A"/>
</dbReference>
<dbReference type="InterPro" id="IPR048641">
    <property type="entry name" value="RlmN_N"/>
</dbReference>
<dbReference type="InterPro" id="IPR027492">
    <property type="entry name" value="RNA_MTrfase_RlmN"/>
</dbReference>
<dbReference type="InterPro" id="IPR004383">
    <property type="entry name" value="rRNA_lsu_MTrfase_RlmN/Cfr"/>
</dbReference>
<dbReference type="InterPro" id="IPR007197">
    <property type="entry name" value="rSAM"/>
</dbReference>
<dbReference type="NCBIfam" id="TIGR00048">
    <property type="entry name" value="rRNA_mod_RlmN"/>
    <property type="match status" value="1"/>
</dbReference>
<dbReference type="PANTHER" id="PTHR30544">
    <property type="entry name" value="23S RRNA METHYLTRANSFERASE"/>
    <property type="match status" value="1"/>
</dbReference>
<dbReference type="PANTHER" id="PTHR30544:SF5">
    <property type="entry name" value="RADICAL SAM CORE DOMAIN-CONTAINING PROTEIN"/>
    <property type="match status" value="1"/>
</dbReference>
<dbReference type="Pfam" id="PF04055">
    <property type="entry name" value="Radical_SAM"/>
    <property type="match status" value="1"/>
</dbReference>
<dbReference type="Pfam" id="PF21016">
    <property type="entry name" value="RlmN_N"/>
    <property type="match status" value="1"/>
</dbReference>
<dbReference type="PIRSF" id="PIRSF006004">
    <property type="entry name" value="CHP00048"/>
    <property type="match status" value="1"/>
</dbReference>
<dbReference type="SFLD" id="SFLDF00275">
    <property type="entry name" value="adenosine_C2_methyltransferase"/>
    <property type="match status" value="1"/>
</dbReference>
<dbReference type="SFLD" id="SFLDG01062">
    <property type="entry name" value="methyltransferase_(Class_A)"/>
    <property type="match status" value="1"/>
</dbReference>
<dbReference type="SUPFAM" id="SSF102114">
    <property type="entry name" value="Radical SAM enzymes"/>
    <property type="match status" value="1"/>
</dbReference>
<dbReference type="PROSITE" id="PS51918">
    <property type="entry name" value="RADICAL_SAM"/>
    <property type="match status" value="1"/>
</dbReference>
<protein>
    <recommendedName>
        <fullName evidence="1">Dual-specificity RNA methyltransferase RlmN</fullName>
        <ecNumber evidence="1">2.1.1.192</ecNumber>
    </recommendedName>
    <alternativeName>
        <fullName evidence="1">23S rRNA (adenine(2503)-C(2))-methyltransferase</fullName>
    </alternativeName>
    <alternativeName>
        <fullName evidence="1">23S rRNA m2A2503 methyltransferase</fullName>
    </alternativeName>
    <alternativeName>
        <fullName evidence="1">Ribosomal RNA large subunit methyltransferase N</fullName>
    </alternativeName>
    <alternativeName>
        <fullName evidence="1">tRNA (adenine(37)-C(2))-methyltransferase</fullName>
    </alternativeName>
    <alternativeName>
        <fullName evidence="1">tRNA m2A37 methyltransferase</fullName>
    </alternativeName>
</protein>